<sequence>MQNTKLLLTSFTFVGLLALAGCSFPGVYKIDIQQGNVVTQDMIDQLRPGMTRRQVRFIMGNALLTDTFHADRWDYLYSLQPGGGERQQERVSVIFNGNDQLVSLSGDFMPGVSRDEALLGKDSGTNVTAPAQEAEKPKSEVPAKPGSLLDTIQKDIDNVETVPVPTPEPLDTSPQ</sequence>
<feature type="signal peptide" evidence="1">
    <location>
        <begin position="1"/>
        <end position="21"/>
    </location>
</feature>
<feature type="chain" id="PRO_0000032816" description="Outer membrane protein assembly factor BamE">
    <location>
        <begin position="22"/>
        <end position="175"/>
    </location>
</feature>
<feature type="region of interest" description="Disordered" evidence="2">
    <location>
        <begin position="117"/>
        <end position="147"/>
    </location>
</feature>
<feature type="region of interest" description="Disordered" evidence="2">
    <location>
        <begin position="156"/>
        <end position="175"/>
    </location>
</feature>
<feature type="lipid moiety-binding region" description="N-palmitoyl cysteine" evidence="1">
    <location>
        <position position="22"/>
    </location>
</feature>
<feature type="lipid moiety-binding region" description="S-diacylglycerol cysteine" evidence="1">
    <location>
        <position position="22"/>
    </location>
</feature>
<name>BAME_PSEFL</name>
<gene>
    <name evidence="1" type="primary">bamE</name>
    <name type="synonym">omlA</name>
    <name type="synonym">oprX</name>
</gene>
<comment type="function">
    <text evidence="1 3">Part of the outer membrane protein assembly complex, which is involved in assembly and insertion of beta-barrel proteins into the outer membrane (By similarity). May have a structural role in maintaining the cell envelope integrity.</text>
</comment>
<comment type="subunit">
    <text evidence="1">Part of the Bam complex.</text>
</comment>
<comment type="subcellular location">
    <subcellularLocation>
        <location evidence="1">Cell outer membrane</location>
        <topology evidence="1">Lipid-anchor</topology>
    </subcellularLocation>
</comment>
<comment type="similarity">
    <text evidence="1">Belongs to the BamE family.</text>
</comment>
<accession>O68564</accession>
<evidence type="ECO:0000255" key="1">
    <source>
        <dbReference type="HAMAP-Rule" id="MF_00925"/>
    </source>
</evidence>
<evidence type="ECO:0000256" key="2">
    <source>
        <dbReference type="SAM" id="MobiDB-lite"/>
    </source>
</evidence>
<evidence type="ECO:0000269" key="3">
    <source>
    </source>
</evidence>
<reference key="1">
    <citation type="journal article" date="1999" name="J. Bacteriol.">
        <title>Pseudomonas aeruginosa fur overlaps with a gene encoding a novel outer membrane lipoprotein, OmlA.</title>
        <authorList>
            <person name="Ochsner U.A."/>
            <person name="Vasil A.I."/>
            <person name="Johnson Z."/>
            <person name="Vasil M.L."/>
        </authorList>
    </citation>
    <scope>NUCLEOTIDE SEQUENCE [GENOMIC DNA]</scope>
    <scope>FUNCTION</scope>
    <source>
        <strain>ATCC 15453 / CIP 104605 / 52-1C</strain>
    </source>
</reference>
<keyword id="KW-0998">Cell outer membrane</keyword>
<keyword id="KW-0449">Lipoprotein</keyword>
<keyword id="KW-0472">Membrane</keyword>
<keyword id="KW-0564">Palmitate</keyword>
<keyword id="KW-0732">Signal</keyword>
<organism>
    <name type="scientific">Pseudomonas fluorescens</name>
    <dbReference type="NCBI Taxonomy" id="294"/>
    <lineage>
        <taxon>Bacteria</taxon>
        <taxon>Pseudomonadati</taxon>
        <taxon>Pseudomonadota</taxon>
        <taxon>Gammaproteobacteria</taxon>
        <taxon>Pseudomonadales</taxon>
        <taxon>Pseudomonadaceae</taxon>
        <taxon>Pseudomonas</taxon>
    </lineage>
</organism>
<dbReference type="EMBL" id="AF050677">
    <property type="protein sequence ID" value="AAC05681.1"/>
    <property type="molecule type" value="Genomic_DNA"/>
</dbReference>
<dbReference type="SMR" id="O68564"/>
<dbReference type="eggNOG" id="COG2913">
    <property type="taxonomic scope" value="Bacteria"/>
</dbReference>
<dbReference type="GO" id="GO:1990063">
    <property type="term" value="C:Bam protein complex"/>
    <property type="evidence" value="ECO:0007669"/>
    <property type="project" value="TreeGrafter"/>
</dbReference>
<dbReference type="GO" id="GO:0030674">
    <property type="term" value="F:protein-macromolecule adaptor activity"/>
    <property type="evidence" value="ECO:0007669"/>
    <property type="project" value="TreeGrafter"/>
</dbReference>
<dbReference type="GO" id="GO:0043165">
    <property type="term" value="P:Gram-negative-bacterium-type cell outer membrane assembly"/>
    <property type="evidence" value="ECO:0007669"/>
    <property type="project" value="UniProtKB-UniRule"/>
</dbReference>
<dbReference type="GO" id="GO:0051205">
    <property type="term" value="P:protein insertion into membrane"/>
    <property type="evidence" value="ECO:0007669"/>
    <property type="project" value="UniProtKB-UniRule"/>
</dbReference>
<dbReference type="FunFam" id="3.30.1450.10:FF:000003">
    <property type="entry name" value="Outer membrane protein assembly factor BamE"/>
    <property type="match status" value="1"/>
</dbReference>
<dbReference type="Gene3D" id="3.30.1450.10">
    <property type="match status" value="1"/>
</dbReference>
<dbReference type="HAMAP" id="MF_00925">
    <property type="entry name" value="OM_assembly_BamE"/>
    <property type="match status" value="1"/>
</dbReference>
<dbReference type="InterPro" id="IPR026592">
    <property type="entry name" value="BamE"/>
</dbReference>
<dbReference type="InterPro" id="IPR037873">
    <property type="entry name" value="BamE-like"/>
</dbReference>
<dbReference type="InterPro" id="IPR007450">
    <property type="entry name" value="BamE_dom"/>
</dbReference>
<dbReference type="PANTHER" id="PTHR37482">
    <property type="entry name" value="OUTER MEMBRANE PROTEIN ASSEMBLY FACTOR BAME"/>
    <property type="match status" value="1"/>
</dbReference>
<dbReference type="PANTHER" id="PTHR37482:SF1">
    <property type="entry name" value="OUTER MEMBRANE PROTEIN ASSEMBLY FACTOR BAME"/>
    <property type="match status" value="1"/>
</dbReference>
<dbReference type="Pfam" id="PF04355">
    <property type="entry name" value="BamE"/>
    <property type="match status" value="1"/>
</dbReference>
<dbReference type="PROSITE" id="PS51257">
    <property type="entry name" value="PROKAR_LIPOPROTEIN"/>
    <property type="match status" value="1"/>
</dbReference>
<proteinExistence type="inferred from homology"/>
<protein>
    <recommendedName>
        <fullName evidence="1">Outer membrane protein assembly factor BamE</fullName>
    </recommendedName>
</protein>